<keyword id="KW-0963">Cytoplasm</keyword>
<keyword id="KW-1185">Reference proteome</keyword>
<keyword id="KW-0694">RNA-binding</keyword>
<accession>Q3AFC2</accession>
<gene>
    <name evidence="1" type="primary">smpB</name>
    <name type="ordered locus">CHY_0290</name>
</gene>
<proteinExistence type="inferred from homology"/>
<sequence>MEKIIAENRKAYHDYHILEKYEAGIALKGTEVKSIRLGRVNLRDSFARIENGELWLYNMHISPYEQGNRFNHEPKRPRKLLMHKREIMRLFGKTREKGLTLVPLKLYFKGNYAKIELGLAKGKKIYDKREEMAKRDAAREIEKALRARY</sequence>
<name>SSRP_CARHZ</name>
<organism>
    <name type="scientific">Carboxydothermus hydrogenoformans (strain ATCC BAA-161 / DSM 6008 / Z-2901)</name>
    <dbReference type="NCBI Taxonomy" id="246194"/>
    <lineage>
        <taxon>Bacteria</taxon>
        <taxon>Bacillati</taxon>
        <taxon>Bacillota</taxon>
        <taxon>Clostridia</taxon>
        <taxon>Thermoanaerobacterales</taxon>
        <taxon>Thermoanaerobacteraceae</taxon>
        <taxon>Carboxydothermus</taxon>
    </lineage>
</organism>
<comment type="function">
    <text evidence="1">Required for rescue of stalled ribosomes mediated by trans-translation. Binds to transfer-messenger RNA (tmRNA), required for stable association of tmRNA with ribosomes. tmRNA and SmpB together mimic tRNA shape, replacing the anticodon stem-loop with SmpB. tmRNA is encoded by the ssrA gene; the 2 termini fold to resemble tRNA(Ala) and it encodes a 'tag peptide', a short internal open reading frame. During trans-translation Ala-aminoacylated tmRNA acts like a tRNA, entering the A-site of stalled ribosomes, displacing the stalled mRNA. The ribosome then switches to translate the ORF on the tmRNA; the nascent peptide is terminated with the 'tag peptide' encoded by the tmRNA and targeted for degradation. The ribosome is freed to recommence translation, which seems to be the essential function of trans-translation.</text>
</comment>
<comment type="subcellular location">
    <subcellularLocation>
        <location evidence="1">Cytoplasm</location>
    </subcellularLocation>
    <text evidence="1">The tmRNA-SmpB complex associates with stalled 70S ribosomes.</text>
</comment>
<comment type="similarity">
    <text evidence="1">Belongs to the SmpB family.</text>
</comment>
<feature type="chain" id="PRO_0000331029" description="SsrA-binding protein">
    <location>
        <begin position="1"/>
        <end position="149"/>
    </location>
</feature>
<protein>
    <recommendedName>
        <fullName evidence="1">SsrA-binding protein</fullName>
    </recommendedName>
    <alternativeName>
        <fullName evidence="1">Small protein B</fullName>
    </alternativeName>
</protein>
<evidence type="ECO:0000255" key="1">
    <source>
        <dbReference type="HAMAP-Rule" id="MF_00023"/>
    </source>
</evidence>
<dbReference type="EMBL" id="CP000141">
    <property type="protein sequence ID" value="ABB14089.1"/>
    <property type="molecule type" value="Genomic_DNA"/>
</dbReference>
<dbReference type="RefSeq" id="WP_011343238.1">
    <property type="nucleotide sequence ID" value="NC_007503.1"/>
</dbReference>
<dbReference type="SMR" id="Q3AFC2"/>
<dbReference type="FunCoup" id="Q3AFC2">
    <property type="interactions" value="325"/>
</dbReference>
<dbReference type="STRING" id="246194.CHY_0290"/>
<dbReference type="KEGG" id="chy:CHY_0290"/>
<dbReference type="eggNOG" id="COG0691">
    <property type="taxonomic scope" value="Bacteria"/>
</dbReference>
<dbReference type="HOGENOM" id="CLU_108953_0_0_9"/>
<dbReference type="InParanoid" id="Q3AFC2"/>
<dbReference type="OrthoDB" id="9805462at2"/>
<dbReference type="Proteomes" id="UP000002706">
    <property type="component" value="Chromosome"/>
</dbReference>
<dbReference type="GO" id="GO:0005829">
    <property type="term" value="C:cytosol"/>
    <property type="evidence" value="ECO:0007669"/>
    <property type="project" value="TreeGrafter"/>
</dbReference>
<dbReference type="GO" id="GO:0003723">
    <property type="term" value="F:RNA binding"/>
    <property type="evidence" value="ECO:0007669"/>
    <property type="project" value="UniProtKB-UniRule"/>
</dbReference>
<dbReference type="GO" id="GO:0070929">
    <property type="term" value="P:trans-translation"/>
    <property type="evidence" value="ECO:0007669"/>
    <property type="project" value="UniProtKB-UniRule"/>
</dbReference>
<dbReference type="CDD" id="cd09294">
    <property type="entry name" value="SmpB"/>
    <property type="match status" value="1"/>
</dbReference>
<dbReference type="Gene3D" id="2.40.280.10">
    <property type="match status" value="1"/>
</dbReference>
<dbReference type="HAMAP" id="MF_00023">
    <property type="entry name" value="SmpB"/>
    <property type="match status" value="1"/>
</dbReference>
<dbReference type="InterPro" id="IPR023620">
    <property type="entry name" value="SmpB"/>
</dbReference>
<dbReference type="InterPro" id="IPR000037">
    <property type="entry name" value="SsrA-bd_prot"/>
</dbReference>
<dbReference type="InterPro" id="IPR020081">
    <property type="entry name" value="SsrA-bd_prot_CS"/>
</dbReference>
<dbReference type="NCBIfam" id="NF003843">
    <property type="entry name" value="PRK05422.1"/>
    <property type="match status" value="1"/>
</dbReference>
<dbReference type="NCBIfam" id="TIGR00086">
    <property type="entry name" value="smpB"/>
    <property type="match status" value="1"/>
</dbReference>
<dbReference type="PANTHER" id="PTHR30308:SF2">
    <property type="entry name" value="SSRA-BINDING PROTEIN"/>
    <property type="match status" value="1"/>
</dbReference>
<dbReference type="PANTHER" id="PTHR30308">
    <property type="entry name" value="TMRNA-BINDING COMPONENT OF TRANS-TRANSLATION TAGGING COMPLEX"/>
    <property type="match status" value="1"/>
</dbReference>
<dbReference type="Pfam" id="PF01668">
    <property type="entry name" value="SmpB"/>
    <property type="match status" value="1"/>
</dbReference>
<dbReference type="SUPFAM" id="SSF74982">
    <property type="entry name" value="Small protein B (SmpB)"/>
    <property type="match status" value="1"/>
</dbReference>
<dbReference type="PROSITE" id="PS01317">
    <property type="entry name" value="SSRP"/>
    <property type="match status" value="1"/>
</dbReference>
<reference key="1">
    <citation type="journal article" date="2005" name="PLoS Genet.">
        <title>Life in hot carbon monoxide: the complete genome sequence of Carboxydothermus hydrogenoformans Z-2901.</title>
        <authorList>
            <person name="Wu M."/>
            <person name="Ren Q."/>
            <person name="Durkin A.S."/>
            <person name="Daugherty S.C."/>
            <person name="Brinkac L.M."/>
            <person name="Dodson R.J."/>
            <person name="Madupu R."/>
            <person name="Sullivan S.A."/>
            <person name="Kolonay J.F."/>
            <person name="Nelson W.C."/>
            <person name="Tallon L.J."/>
            <person name="Jones K.M."/>
            <person name="Ulrich L.E."/>
            <person name="Gonzalez J.M."/>
            <person name="Zhulin I.B."/>
            <person name="Robb F.T."/>
            <person name="Eisen J.A."/>
        </authorList>
    </citation>
    <scope>NUCLEOTIDE SEQUENCE [LARGE SCALE GENOMIC DNA]</scope>
    <source>
        <strain>ATCC BAA-161 / DSM 6008 / Z-2901</strain>
    </source>
</reference>